<evidence type="ECO:0000250" key="1"/>
<evidence type="ECO:0000305" key="2"/>
<sequence>MKHSSWHDLIKRELPNHYYNKINTFMDAVYESGIVYPPRDKVFNAIQITPLENVKVVIIGQDPYHGPQQAQGLSFSVPDNLPAPPSLQNILKELAEDIGSRSHHDLTSWAQQGVLLLNACLTVPEHQANGHAGLIWEPFTDAVIKVVNQKETPVVFILWGGYARKKKSLIDNPIHHIIESPHPSPLSAYRGFFGSRPFSRTNHFLEEEGINEIDWLN</sequence>
<accession>P0A4P4</accession>
<accession>Q9XDS8</accession>
<keyword id="KW-0963">Cytoplasm</keyword>
<keyword id="KW-0227">DNA damage</keyword>
<keyword id="KW-0234">DNA repair</keyword>
<keyword id="KW-0378">Hydrolase</keyword>
<keyword id="KW-1185">Reference proteome</keyword>
<dbReference type="EC" id="3.2.2.27"/>
<dbReference type="EMBL" id="AE009948">
    <property type="protein sequence ID" value="AAN00038.1"/>
    <property type="molecule type" value="Genomic_DNA"/>
</dbReference>
<dbReference type="RefSeq" id="NP_688165.1">
    <property type="nucleotide sequence ID" value="NC_004116.1"/>
</dbReference>
<dbReference type="RefSeq" id="WP_000682955.1">
    <property type="nucleotide sequence ID" value="NC_004116.1"/>
</dbReference>
<dbReference type="SMR" id="P0A4P4"/>
<dbReference type="STRING" id="208435.SAG1156"/>
<dbReference type="KEGG" id="sag:SAG1156"/>
<dbReference type="PATRIC" id="fig|208435.3.peg.1162"/>
<dbReference type="HOGENOM" id="CLU_032162_3_1_9"/>
<dbReference type="OrthoDB" id="9804372at2"/>
<dbReference type="Proteomes" id="UP000000821">
    <property type="component" value="Chromosome"/>
</dbReference>
<dbReference type="GO" id="GO:0005737">
    <property type="term" value="C:cytoplasm"/>
    <property type="evidence" value="ECO:0007669"/>
    <property type="project" value="UniProtKB-SubCell"/>
</dbReference>
<dbReference type="GO" id="GO:0004844">
    <property type="term" value="F:uracil DNA N-glycosylase activity"/>
    <property type="evidence" value="ECO:0007669"/>
    <property type="project" value="UniProtKB-UniRule"/>
</dbReference>
<dbReference type="GO" id="GO:0097510">
    <property type="term" value="P:base-excision repair, AP site formation via deaminated base removal"/>
    <property type="evidence" value="ECO:0007669"/>
    <property type="project" value="TreeGrafter"/>
</dbReference>
<dbReference type="CDD" id="cd10027">
    <property type="entry name" value="UDG-F1-like"/>
    <property type="match status" value="1"/>
</dbReference>
<dbReference type="FunFam" id="3.40.470.10:FF:000008">
    <property type="entry name" value="Uracil-DNA glycosylase"/>
    <property type="match status" value="1"/>
</dbReference>
<dbReference type="Gene3D" id="3.40.470.10">
    <property type="entry name" value="Uracil-DNA glycosylase-like domain"/>
    <property type="match status" value="1"/>
</dbReference>
<dbReference type="HAMAP" id="MF_00148">
    <property type="entry name" value="UDG"/>
    <property type="match status" value="1"/>
</dbReference>
<dbReference type="InterPro" id="IPR002043">
    <property type="entry name" value="UDG_fam1"/>
</dbReference>
<dbReference type="InterPro" id="IPR018085">
    <property type="entry name" value="Ura-DNA_Glyclase_AS"/>
</dbReference>
<dbReference type="InterPro" id="IPR005122">
    <property type="entry name" value="Uracil-DNA_glycosylase-like"/>
</dbReference>
<dbReference type="InterPro" id="IPR036895">
    <property type="entry name" value="Uracil-DNA_glycosylase-like_sf"/>
</dbReference>
<dbReference type="NCBIfam" id="NF003588">
    <property type="entry name" value="PRK05254.1-1"/>
    <property type="match status" value="1"/>
</dbReference>
<dbReference type="NCBIfam" id="NF003589">
    <property type="entry name" value="PRK05254.1-2"/>
    <property type="match status" value="1"/>
</dbReference>
<dbReference type="NCBIfam" id="NF003591">
    <property type="entry name" value="PRK05254.1-4"/>
    <property type="match status" value="1"/>
</dbReference>
<dbReference type="NCBIfam" id="NF003592">
    <property type="entry name" value="PRK05254.1-5"/>
    <property type="match status" value="1"/>
</dbReference>
<dbReference type="NCBIfam" id="TIGR00628">
    <property type="entry name" value="ung"/>
    <property type="match status" value="1"/>
</dbReference>
<dbReference type="PANTHER" id="PTHR11264">
    <property type="entry name" value="URACIL-DNA GLYCOSYLASE"/>
    <property type="match status" value="1"/>
</dbReference>
<dbReference type="PANTHER" id="PTHR11264:SF0">
    <property type="entry name" value="URACIL-DNA GLYCOSYLASE"/>
    <property type="match status" value="1"/>
</dbReference>
<dbReference type="Pfam" id="PF03167">
    <property type="entry name" value="UDG"/>
    <property type="match status" value="1"/>
</dbReference>
<dbReference type="SMART" id="SM00986">
    <property type="entry name" value="UDG"/>
    <property type="match status" value="1"/>
</dbReference>
<dbReference type="SMART" id="SM00987">
    <property type="entry name" value="UreE_C"/>
    <property type="match status" value="1"/>
</dbReference>
<dbReference type="SUPFAM" id="SSF52141">
    <property type="entry name" value="Uracil-DNA glycosylase-like"/>
    <property type="match status" value="1"/>
</dbReference>
<dbReference type="PROSITE" id="PS00130">
    <property type="entry name" value="U_DNA_GLYCOSYLASE"/>
    <property type="match status" value="1"/>
</dbReference>
<organism>
    <name type="scientific">Streptococcus agalactiae serotype V (strain ATCC BAA-611 / 2603 V/R)</name>
    <dbReference type="NCBI Taxonomy" id="208435"/>
    <lineage>
        <taxon>Bacteria</taxon>
        <taxon>Bacillati</taxon>
        <taxon>Bacillota</taxon>
        <taxon>Bacilli</taxon>
        <taxon>Lactobacillales</taxon>
        <taxon>Streptococcaceae</taxon>
        <taxon>Streptococcus</taxon>
    </lineage>
</organism>
<proteinExistence type="inferred from homology"/>
<feature type="chain" id="PRO_0000176146" description="Uracil-DNA glycosylase">
    <location>
        <begin position="1"/>
        <end position="217"/>
    </location>
</feature>
<feature type="active site" description="Proton acceptor" evidence="1">
    <location>
        <position position="62"/>
    </location>
</feature>
<protein>
    <recommendedName>
        <fullName>Uracil-DNA glycosylase</fullName>
        <shortName>UDG</shortName>
        <ecNumber>3.2.2.27</ecNumber>
    </recommendedName>
</protein>
<comment type="function">
    <text evidence="1">Excises uracil residues from the DNA which can arise as a result of misincorporation of dUMP residues by DNA polymerase or due to deamination of cytosine.</text>
</comment>
<comment type="catalytic activity">
    <reaction>
        <text>Hydrolyzes single-stranded DNA or mismatched double-stranded DNA and polynucleotides, releasing free uracil.</text>
        <dbReference type="EC" id="3.2.2.27"/>
    </reaction>
</comment>
<comment type="subcellular location">
    <subcellularLocation>
        <location evidence="1">Cytoplasm</location>
    </subcellularLocation>
</comment>
<comment type="similarity">
    <text evidence="2">Belongs to the uracil-DNA glycosylase (UDG) superfamily. UNG family.</text>
</comment>
<name>UNG_STRA5</name>
<reference key="1">
    <citation type="journal article" date="2002" name="Proc. Natl. Acad. Sci. U.S.A.">
        <title>Complete genome sequence and comparative genomic analysis of an emerging human pathogen, serotype V Streptococcus agalactiae.</title>
        <authorList>
            <person name="Tettelin H."/>
            <person name="Masignani V."/>
            <person name="Cieslewicz M.J."/>
            <person name="Eisen J.A."/>
            <person name="Peterson S.N."/>
            <person name="Wessels M.R."/>
            <person name="Paulsen I.T."/>
            <person name="Nelson K.E."/>
            <person name="Margarit I."/>
            <person name="Read T.D."/>
            <person name="Madoff L.C."/>
            <person name="Wolf A.M."/>
            <person name="Beanan M.J."/>
            <person name="Brinkac L.M."/>
            <person name="Daugherty S.C."/>
            <person name="DeBoy R.T."/>
            <person name="Durkin A.S."/>
            <person name="Kolonay J.F."/>
            <person name="Madupu R."/>
            <person name="Lewis M.R."/>
            <person name="Radune D."/>
            <person name="Fedorova N.B."/>
            <person name="Scanlan D."/>
            <person name="Khouri H.M."/>
            <person name="Mulligan S."/>
            <person name="Carty H.A."/>
            <person name="Cline R.T."/>
            <person name="Van Aken S.E."/>
            <person name="Gill J."/>
            <person name="Scarselli M."/>
            <person name="Mora M."/>
            <person name="Iacobini E.T."/>
            <person name="Brettoni C."/>
            <person name="Galli G."/>
            <person name="Mariani M."/>
            <person name="Vegni F."/>
            <person name="Maione D."/>
            <person name="Rinaudo D."/>
            <person name="Rappuoli R."/>
            <person name="Telford J.L."/>
            <person name="Kasper D.L."/>
            <person name="Grandi G."/>
            <person name="Fraser C.M."/>
        </authorList>
    </citation>
    <scope>NUCLEOTIDE SEQUENCE [LARGE SCALE GENOMIC DNA]</scope>
    <source>
        <strain>ATCC BAA-611 / 2603 V/R</strain>
    </source>
</reference>
<gene>
    <name type="primary">ung</name>
    <name type="ordered locus">SAG1156</name>
</gene>